<keyword id="KW-0030">Aminoacyl-tRNA synthetase</keyword>
<keyword id="KW-0067">ATP-binding</keyword>
<keyword id="KW-1003">Cell membrane</keyword>
<keyword id="KW-0963">Cytoplasm</keyword>
<keyword id="KW-0436">Ligase</keyword>
<keyword id="KW-0472">Membrane</keyword>
<keyword id="KW-0547">Nucleotide-binding</keyword>
<keyword id="KW-0648">Protein biosynthesis</keyword>
<keyword id="KW-0812">Transmembrane</keyword>
<keyword id="KW-1133">Transmembrane helix</keyword>
<dbReference type="EC" id="6.1.1.17"/>
<dbReference type="EMBL" id="CP000393">
    <property type="protein sequence ID" value="ABG49679.1"/>
    <property type="molecule type" value="Genomic_DNA"/>
</dbReference>
<dbReference type="SMR" id="Q119Z5"/>
<dbReference type="STRING" id="203124.Tery_0188"/>
<dbReference type="KEGG" id="ter:Tery_0188"/>
<dbReference type="eggNOG" id="COG0008">
    <property type="taxonomic scope" value="Bacteria"/>
</dbReference>
<dbReference type="HOGENOM" id="CLU_015768_4_0_3"/>
<dbReference type="OrthoDB" id="9807503at2"/>
<dbReference type="GO" id="GO:0005829">
    <property type="term" value="C:cytosol"/>
    <property type="evidence" value="ECO:0007669"/>
    <property type="project" value="TreeGrafter"/>
</dbReference>
<dbReference type="GO" id="GO:0005886">
    <property type="term" value="C:plasma membrane"/>
    <property type="evidence" value="ECO:0007669"/>
    <property type="project" value="UniProtKB-SubCell"/>
</dbReference>
<dbReference type="GO" id="GO:0005524">
    <property type="term" value="F:ATP binding"/>
    <property type="evidence" value="ECO:0007669"/>
    <property type="project" value="UniProtKB-UniRule"/>
</dbReference>
<dbReference type="GO" id="GO:0004818">
    <property type="term" value="F:glutamate-tRNA ligase activity"/>
    <property type="evidence" value="ECO:0007669"/>
    <property type="project" value="UniProtKB-UniRule"/>
</dbReference>
<dbReference type="GO" id="GO:0000049">
    <property type="term" value="F:tRNA binding"/>
    <property type="evidence" value="ECO:0007669"/>
    <property type="project" value="InterPro"/>
</dbReference>
<dbReference type="GO" id="GO:0008270">
    <property type="term" value="F:zinc ion binding"/>
    <property type="evidence" value="ECO:0007669"/>
    <property type="project" value="InterPro"/>
</dbReference>
<dbReference type="GO" id="GO:0006424">
    <property type="term" value="P:glutamyl-tRNA aminoacylation"/>
    <property type="evidence" value="ECO:0007669"/>
    <property type="project" value="UniProtKB-UniRule"/>
</dbReference>
<dbReference type="CDD" id="cd00808">
    <property type="entry name" value="GluRS_core"/>
    <property type="match status" value="1"/>
</dbReference>
<dbReference type="FunFam" id="3.40.50.620:FF:000007">
    <property type="entry name" value="Glutamate--tRNA ligase"/>
    <property type="match status" value="1"/>
</dbReference>
<dbReference type="Gene3D" id="1.10.10.350">
    <property type="match status" value="1"/>
</dbReference>
<dbReference type="Gene3D" id="1.10.8.70">
    <property type="entry name" value="Glutamate-tRNA synthetase, class I, anticodon-binding domain 1"/>
    <property type="match status" value="1"/>
</dbReference>
<dbReference type="Gene3D" id="1.10.1160.10">
    <property type="entry name" value="Glutamyl-trna Synthetase, Domain 2"/>
    <property type="match status" value="1"/>
</dbReference>
<dbReference type="Gene3D" id="3.90.800.10">
    <property type="entry name" value="Glutamyl-tRNA Synthetase, Domain 3"/>
    <property type="match status" value="1"/>
</dbReference>
<dbReference type="Gene3D" id="3.40.50.620">
    <property type="entry name" value="HUPs"/>
    <property type="match status" value="1"/>
</dbReference>
<dbReference type="HAMAP" id="MF_00022">
    <property type="entry name" value="Glu_tRNA_synth_type1"/>
    <property type="match status" value="1"/>
</dbReference>
<dbReference type="InterPro" id="IPR045462">
    <property type="entry name" value="aa-tRNA-synth_I_cd-bd"/>
</dbReference>
<dbReference type="InterPro" id="IPR020751">
    <property type="entry name" value="aa-tRNA-synth_I_codon-bd_sub2"/>
</dbReference>
<dbReference type="InterPro" id="IPR001412">
    <property type="entry name" value="aa-tRNA-synth_I_CS"/>
</dbReference>
<dbReference type="InterPro" id="IPR008925">
    <property type="entry name" value="aa_tRNA-synth_I_cd-bd_sf"/>
</dbReference>
<dbReference type="InterPro" id="IPR025564">
    <property type="entry name" value="CAAD_dom"/>
</dbReference>
<dbReference type="InterPro" id="IPR004527">
    <property type="entry name" value="Glu-tRNA-ligase_bac/mito"/>
</dbReference>
<dbReference type="InterPro" id="IPR020752">
    <property type="entry name" value="Glu-tRNA-synth_I_codon-bd_sub1"/>
</dbReference>
<dbReference type="InterPro" id="IPR000924">
    <property type="entry name" value="Glu/Gln-tRNA-synth"/>
</dbReference>
<dbReference type="InterPro" id="IPR020058">
    <property type="entry name" value="Glu/Gln-tRNA-synth_Ib_cat-dom"/>
</dbReference>
<dbReference type="InterPro" id="IPR020061">
    <property type="entry name" value="Glu_tRNA_lig_a-bdl"/>
</dbReference>
<dbReference type="InterPro" id="IPR049940">
    <property type="entry name" value="GluQ/Sye"/>
</dbReference>
<dbReference type="InterPro" id="IPR033910">
    <property type="entry name" value="GluRS_core"/>
</dbReference>
<dbReference type="InterPro" id="IPR014729">
    <property type="entry name" value="Rossmann-like_a/b/a_fold"/>
</dbReference>
<dbReference type="NCBIfam" id="TIGR00464">
    <property type="entry name" value="gltX_bact"/>
    <property type="match status" value="1"/>
</dbReference>
<dbReference type="PANTHER" id="PTHR43311">
    <property type="entry name" value="GLUTAMATE--TRNA LIGASE"/>
    <property type="match status" value="1"/>
</dbReference>
<dbReference type="PANTHER" id="PTHR43311:SF2">
    <property type="entry name" value="GLUTAMATE--TRNA LIGASE, MITOCHONDRIAL-RELATED"/>
    <property type="match status" value="1"/>
</dbReference>
<dbReference type="Pfam" id="PF19269">
    <property type="entry name" value="Anticodon_2"/>
    <property type="match status" value="1"/>
</dbReference>
<dbReference type="Pfam" id="PF14159">
    <property type="entry name" value="CAAD"/>
    <property type="match status" value="1"/>
</dbReference>
<dbReference type="Pfam" id="PF00749">
    <property type="entry name" value="tRNA-synt_1c"/>
    <property type="match status" value="1"/>
</dbReference>
<dbReference type="PRINTS" id="PR00987">
    <property type="entry name" value="TRNASYNTHGLU"/>
</dbReference>
<dbReference type="SUPFAM" id="SSF48163">
    <property type="entry name" value="An anticodon-binding domain of class I aminoacyl-tRNA synthetases"/>
    <property type="match status" value="1"/>
</dbReference>
<dbReference type="SUPFAM" id="SSF52374">
    <property type="entry name" value="Nucleotidylyl transferase"/>
    <property type="match status" value="1"/>
</dbReference>
<dbReference type="PROSITE" id="PS00178">
    <property type="entry name" value="AA_TRNA_LIGASE_I"/>
    <property type="match status" value="1"/>
</dbReference>
<protein>
    <recommendedName>
        <fullName>Glutamate--tRNA ligase</fullName>
        <ecNumber>6.1.1.17</ecNumber>
    </recommendedName>
    <alternativeName>
        <fullName>Glutamyl-tRNA synthetase</fullName>
        <shortName>GluRS</shortName>
    </alternativeName>
</protein>
<organism>
    <name type="scientific">Trichodesmium erythraeum (strain IMS101)</name>
    <dbReference type="NCBI Taxonomy" id="203124"/>
    <lineage>
        <taxon>Bacteria</taxon>
        <taxon>Bacillati</taxon>
        <taxon>Cyanobacteriota</taxon>
        <taxon>Cyanophyceae</taxon>
        <taxon>Oscillatoriophycideae</taxon>
        <taxon>Oscillatoriales</taxon>
        <taxon>Microcoleaceae</taxon>
        <taxon>Trichodesmium</taxon>
    </lineage>
</organism>
<evidence type="ECO:0000250" key="1"/>
<evidence type="ECO:0000255" key="2"/>
<evidence type="ECO:0000256" key="3">
    <source>
        <dbReference type="SAM" id="MobiDB-lite"/>
    </source>
</evidence>
<evidence type="ECO:0000305" key="4"/>
<gene>
    <name type="primary">gltX</name>
    <name type="ordered locus">Tery_0188</name>
</gene>
<feature type="chain" id="PRO_0000367797" description="Glutamate--tRNA ligase">
    <location>
        <begin position="1"/>
        <end position="881"/>
    </location>
</feature>
<feature type="transmembrane region" description="Helical" evidence="2">
    <location>
        <begin position="809"/>
        <end position="829"/>
    </location>
</feature>
<feature type="transmembrane region" description="Helical" evidence="2">
    <location>
        <begin position="832"/>
        <end position="852"/>
    </location>
</feature>
<feature type="region of interest" description="Glutamyl-tRNA synthetase">
    <location>
        <begin position="1"/>
        <end position="480"/>
    </location>
</feature>
<feature type="region of interest" description="Unknown">
    <location>
        <begin position="481"/>
        <end position="881"/>
    </location>
</feature>
<feature type="region of interest" description="Disordered" evidence="3">
    <location>
        <begin position="488"/>
        <end position="747"/>
    </location>
</feature>
<feature type="short sequence motif" description="'HIGH' region">
    <location>
        <begin position="9"/>
        <end position="19"/>
    </location>
</feature>
<feature type="short sequence motif" description="'KMSKS' region">
    <location>
        <begin position="248"/>
        <end position="252"/>
    </location>
</feature>
<feature type="compositionally biased region" description="Basic and acidic residues" evidence="3">
    <location>
        <begin position="488"/>
        <end position="502"/>
    </location>
</feature>
<feature type="compositionally biased region" description="Low complexity" evidence="3">
    <location>
        <begin position="522"/>
        <end position="548"/>
    </location>
</feature>
<feature type="compositionally biased region" description="Polar residues" evidence="3">
    <location>
        <begin position="549"/>
        <end position="562"/>
    </location>
</feature>
<feature type="compositionally biased region" description="Low complexity" evidence="3">
    <location>
        <begin position="563"/>
        <end position="576"/>
    </location>
</feature>
<feature type="compositionally biased region" description="Polar residues" evidence="3">
    <location>
        <begin position="577"/>
        <end position="590"/>
    </location>
</feature>
<feature type="compositionally biased region" description="Low complexity" evidence="3">
    <location>
        <begin position="591"/>
        <end position="604"/>
    </location>
</feature>
<feature type="compositionally biased region" description="Polar residues" evidence="3">
    <location>
        <begin position="605"/>
        <end position="618"/>
    </location>
</feature>
<feature type="compositionally biased region" description="Low complexity" evidence="3">
    <location>
        <begin position="619"/>
        <end position="632"/>
    </location>
</feature>
<feature type="compositionally biased region" description="Polar residues" evidence="3">
    <location>
        <begin position="633"/>
        <end position="646"/>
    </location>
</feature>
<feature type="compositionally biased region" description="Low complexity" evidence="3">
    <location>
        <begin position="647"/>
        <end position="660"/>
    </location>
</feature>
<feature type="compositionally biased region" description="Polar residues" evidence="3">
    <location>
        <begin position="661"/>
        <end position="674"/>
    </location>
</feature>
<feature type="compositionally biased region" description="Low complexity" evidence="3">
    <location>
        <begin position="675"/>
        <end position="688"/>
    </location>
</feature>
<feature type="compositionally biased region" description="Polar residues" evidence="3">
    <location>
        <begin position="689"/>
        <end position="702"/>
    </location>
</feature>
<feature type="compositionally biased region" description="Low complexity" evidence="3">
    <location>
        <begin position="703"/>
        <end position="720"/>
    </location>
</feature>
<feature type="compositionally biased region" description="Polar residues" evidence="3">
    <location>
        <begin position="721"/>
        <end position="730"/>
    </location>
</feature>
<feature type="compositionally biased region" description="Low complexity" evidence="3">
    <location>
        <begin position="731"/>
        <end position="742"/>
    </location>
</feature>
<feature type="binding site" evidence="1">
    <location>
        <position position="251"/>
    </location>
    <ligand>
        <name>ATP</name>
        <dbReference type="ChEBI" id="CHEBI:30616"/>
    </ligand>
</feature>
<accession>Q119Z5</accession>
<comment type="function">
    <text evidence="1">Catalyzes the attachment of glutamate to tRNA(Glu) in a two-step reaction: glutamate is first activated by ATP to form Glu-AMP and then transferred to the acceptor end of tRNA(Glu).</text>
</comment>
<comment type="catalytic activity">
    <reaction>
        <text>tRNA(Glu) + L-glutamate + ATP = L-glutamyl-tRNA(Glu) + AMP + diphosphate</text>
        <dbReference type="Rhea" id="RHEA:23540"/>
        <dbReference type="Rhea" id="RHEA-COMP:9663"/>
        <dbReference type="Rhea" id="RHEA-COMP:9680"/>
        <dbReference type="ChEBI" id="CHEBI:29985"/>
        <dbReference type="ChEBI" id="CHEBI:30616"/>
        <dbReference type="ChEBI" id="CHEBI:33019"/>
        <dbReference type="ChEBI" id="CHEBI:78442"/>
        <dbReference type="ChEBI" id="CHEBI:78520"/>
        <dbReference type="ChEBI" id="CHEBI:456215"/>
        <dbReference type="EC" id="6.1.1.17"/>
    </reaction>
</comment>
<comment type="subunit">
    <text evidence="1">Monomer.</text>
</comment>
<comment type="subcellular location">
    <subcellularLocation>
        <location evidence="1">Cytoplasm</location>
    </subcellularLocation>
    <subcellularLocation>
        <location evidence="4">Cell membrane</location>
        <topology evidence="4">Multi-pass membrane protein</topology>
    </subcellularLocation>
</comment>
<comment type="similarity">
    <text evidence="4">Belongs to the class-I aminoacyl-tRNA synthetase family. Glutamate--tRNA ligase type 1 subfamily.</text>
</comment>
<sequence length="881" mass="98269">MSVRVRLAPSPTGNLHIGTARTAVFNWLFARNQKGKFILRIEDTDQERSRPEYTDNILEGLSWLGLEWDEGPFYQCQRYELYQKATQSLLDKGLAYRCYCTAAELEEMREAQKARKEAPRYDNRHRNLTDLEKKAFEAEGRQAVIRFRIDDDQIITWNDMVRGKVTWKGSDLGGDMVISRAAGGDEVGQPLYNMAVVVDDMDMEITHVIRGEDHIANTAKQILLYEALGGKIPEFGHTPLILNKEGRKLSKRDGVTSISDFQELGFTPEALANYMCLLGWTPPDATEEIFTLAQAGQNFSFERVNKAGAKFDWDKLDWISSQYLHNLPVKQLTDKLIPIWQKAGYELDPEGDRSWLEQLVTLIRPSLTRLTDAVEMSELFFFPTVELNEDAKTQMQNEDSVKSINSILEIINADAPLLVADVKQTIKKVTQKVHVKKGVVMRSLRASLTGAMQGPDLIESWLLLHQKGFDILRFKKSIGQEIEDTKIEDTKKAETTPHKSKGEGNVLLKTTTPKSPALSKEQTQTTKPPKKGQTATPVATTPTATDVTENTSVGTQETQSQITTPVATTPTATDVTENTSVGTQETQSQITTPVATTPTATDVTENTSVETQETQSQITTPVATTPTATDVTENTSVETQETQSQITTPVATTPTATDVTENTSVGTQETQSQITTPVATTPTATDVTENTSVETQETQSQITTPVATTSTATDVTENTSVETQETQSQITTPVATTPTATDAETREQKVATQVETSILDDQKPVDTVTNQTVEVEQPNKIKEQFINIFFNFPDYINQLYQQYQGQLKLFGWLALVILTFTFMAVVIEALDGIPILSIIFELIGVIYLVWFVYRYLLKRSNRQELLDKIENIKREIFGKPS</sequence>
<reference key="1">
    <citation type="journal article" date="2015" name="Proc. Natl. Acad. Sci. U.S.A.">
        <title>Trichodesmium genome maintains abundant, widespread noncoding DNA in situ, despite oligotrophic lifestyle.</title>
        <authorList>
            <person name="Walworth N."/>
            <person name="Pfreundt U."/>
            <person name="Nelson W.C."/>
            <person name="Mincer T."/>
            <person name="Heidelberg J.F."/>
            <person name="Fu F."/>
            <person name="Waterbury J.B."/>
            <person name="Glavina del Rio T."/>
            <person name="Goodwin L."/>
            <person name="Kyrpides N.C."/>
            <person name="Land M.L."/>
            <person name="Woyke T."/>
            <person name="Hutchins D.A."/>
            <person name="Hess W.R."/>
            <person name="Webb E.A."/>
        </authorList>
    </citation>
    <scope>NUCLEOTIDE SEQUENCE [LARGE SCALE GENOMIC DNA]</scope>
    <source>
        <strain>IMS101</strain>
    </source>
</reference>
<name>SYE_TRIEI</name>
<proteinExistence type="inferred from homology"/>